<accession>A0QEZ9</accession>
<gene>
    <name evidence="1" type="primary">cobT</name>
    <name type="ordered locus">MAV_2283</name>
</gene>
<evidence type="ECO:0000255" key="1">
    <source>
        <dbReference type="HAMAP-Rule" id="MF_00230"/>
    </source>
</evidence>
<keyword id="KW-0169">Cobalamin biosynthesis</keyword>
<keyword id="KW-0328">Glycosyltransferase</keyword>
<keyword id="KW-0808">Transferase</keyword>
<comment type="function">
    <text evidence="1">Catalyzes the synthesis of alpha-ribazole-5'-phosphate from nicotinate mononucleotide (NAMN) and 5,6-dimethylbenzimidazole (DMB).</text>
</comment>
<comment type="catalytic activity">
    <reaction evidence="1">
        <text>5,6-dimethylbenzimidazole + nicotinate beta-D-ribonucleotide = alpha-ribazole 5'-phosphate + nicotinate + H(+)</text>
        <dbReference type="Rhea" id="RHEA:11196"/>
        <dbReference type="ChEBI" id="CHEBI:15378"/>
        <dbReference type="ChEBI" id="CHEBI:15890"/>
        <dbReference type="ChEBI" id="CHEBI:32544"/>
        <dbReference type="ChEBI" id="CHEBI:57502"/>
        <dbReference type="ChEBI" id="CHEBI:57918"/>
        <dbReference type="EC" id="2.4.2.21"/>
    </reaction>
</comment>
<comment type="pathway">
    <text evidence="1">Nucleoside biosynthesis; alpha-ribazole biosynthesis; alpha-ribazole from 5,6-dimethylbenzimidazole: step 1/2.</text>
</comment>
<comment type="similarity">
    <text evidence="1">Belongs to the CobT family.</text>
</comment>
<feature type="chain" id="PRO_1000021602" description="Nicotinate-nucleotide--dimethylbenzimidazole phosphoribosyltransferase">
    <location>
        <begin position="1"/>
        <end position="349"/>
    </location>
</feature>
<feature type="active site" description="Proton acceptor" evidence="1">
    <location>
        <position position="313"/>
    </location>
</feature>
<dbReference type="EC" id="2.4.2.21" evidence="1"/>
<dbReference type="EMBL" id="CP000479">
    <property type="protein sequence ID" value="ABK65706.1"/>
    <property type="molecule type" value="Genomic_DNA"/>
</dbReference>
<dbReference type="SMR" id="A0QEZ9"/>
<dbReference type="KEGG" id="mav:MAV_2283"/>
<dbReference type="HOGENOM" id="CLU_002982_0_2_11"/>
<dbReference type="UniPathway" id="UPA00061">
    <property type="reaction ID" value="UER00516"/>
</dbReference>
<dbReference type="Proteomes" id="UP000001574">
    <property type="component" value="Chromosome"/>
</dbReference>
<dbReference type="GO" id="GO:0008939">
    <property type="term" value="F:nicotinate-nucleotide-dimethylbenzimidazole phosphoribosyltransferase activity"/>
    <property type="evidence" value="ECO:0007669"/>
    <property type="project" value="UniProtKB-UniRule"/>
</dbReference>
<dbReference type="GO" id="GO:0009236">
    <property type="term" value="P:cobalamin biosynthetic process"/>
    <property type="evidence" value="ECO:0007669"/>
    <property type="project" value="UniProtKB-KW"/>
</dbReference>
<dbReference type="CDD" id="cd02439">
    <property type="entry name" value="DMB-PRT_CobT"/>
    <property type="match status" value="1"/>
</dbReference>
<dbReference type="FunFam" id="3.40.50.10210:FF:000001">
    <property type="entry name" value="Nicotinate-nucleotide--dimethylbenzimidazole phosphoribosyltransferase"/>
    <property type="match status" value="1"/>
</dbReference>
<dbReference type="Gene3D" id="1.10.1610.10">
    <property type="match status" value="1"/>
</dbReference>
<dbReference type="Gene3D" id="3.40.50.10210">
    <property type="match status" value="1"/>
</dbReference>
<dbReference type="HAMAP" id="MF_00230">
    <property type="entry name" value="CobT"/>
    <property type="match status" value="1"/>
</dbReference>
<dbReference type="InterPro" id="IPR003200">
    <property type="entry name" value="Nict_dMeBzImd_PRibTrfase"/>
</dbReference>
<dbReference type="InterPro" id="IPR017846">
    <property type="entry name" value="Nict_dMeBzImd_PRibTrfase_bact"/>
</dbReference>
<dbReference type="InterPro" id="IPR023195">
    <property type="entry name" value="Nict_dMeBzImd_PRibTrfase_N"/>
</dbReference>
<dbReference type="InterPro" id="IPR036087">
    <property type="entry name" value="Nict_dMeBzImd_PRibTrfase_sf"/>
</dbReference>
<dbReference type="NCBIfam" id="TIGR03160">
    <property type="entry name" value="cobT_DBIPRT"/>
    <property type="match status" value="1"/>
</dbReference>
<dbReference type="NCBIfam" id="NF000996">
    <property type="entry name" value="PRK00105.1"/>
    <property type="match status" value="1"/>
</dbReference>
<dbReference type="PANTHER" id="PTHR43463">
    <property type="entry name" value="NICOTINATE-NUCLEOTIDE--DIMETHYLBENZIMIDAZOLE PHOSPHORIBOSYLTRANSFERASE"/>
    <property type="match status" value="1"/>
</dbReference>
<dbReference type="PANTHER" id="PTHR43463:SF1">
    <property type="entry name" value="NICOTINATE-NUCLEOTIDE--DIMETHYLBENZIMIDAZOLE PHOSPHORIBOSYLTRANSFERASE"/>
    <property type="match status" value="1"/>
</dbReference>
<dbReference type="Pfam" id="PF02277">
    <property type="entry name" value="DBI_PRT"/>
    <property type="match status" value="1"/>
</dbReference>
<dbReference type="SUPFAM" id="SSF52733">
    <property type="entry name" value="Nicotinate mononucleotide:5,6-dimethylbenzimidazole phosphoribosyltransferase (CobT)"/>
    <property type="match status" value="1"/>
</dbReference>
<organism>
    <name type="scientific">Mycobacterium avium (strain 104)</name>
    <dbReference type="NCBI Taxonomy" id="243243"/>
    <lineage>
        <taxon>Bacteria</taxon>
        <taxon>Bacillati</taxon>
        <taxon>Actinomycetota</taxon>
        <taxon>Actinomycetes</taxon>
        <taxon>Mycobacteriales</taxon>
        <taxon>Mycobacteriaceae</taxon>
        <taxon>Mycobacterium</taxon>
        <taxon>Mycobacterium avium complex (MAC)</taxon>
    </lineage>
</organism>
<sequence length="349" mass="35344">MEFATVSPPDPGAAAAARARQDTLTKPRGALGRLEDLSVWIAACQGQCPPRQFERARVVVFAGDHGVARCGVSAYPPEVTAQMVANFDAGGAAINALAGVAGASVRVADLAVDADPPDDRIGANKVRRGSGDITVQDALTAEETERALSAGAAIADEEVDAGADLLIAGDMGIGNTTAAAVLVAALTNVEPVVAVGFGTGIDDAGWARKTAAVRDALFRARRVLPDPVALLRCAGGADLAALAGFCAQAAVRRTPLLLDGMAVTAAALVAEHLAPGARLWWQAGHRSTEPGHALALTALDLEPILDLRMRLGEGTGAALALPIVRAAVAALSSMATFAQAGVSDPSAHP</sequence>
<reference key="1">
    <citation type="submission" date="2006-10" db="EMBL/GenBank/DDBJ databases">
        <authorList>
            <person name="Fleischmann R.D."/>
            <person name="Dodson R.J."/>
            <person name="Haft D.H."/>
            <person name="Merkel J.S."/>
            <person name="Nelson W.C."/>
            <person name="Fraser C.M."/>
        </authorList>
    </citation>
    <scope>NUCLEOTIDE SEQUENCE [LARGE SCALE GENOMIC DNA]</scope>
    <source>
        <strain>104</strain>
    </source>
</reference>
<proteinExistence type="inferred from homology"/>
<name>COBT_MYCA1</name>
<protein>
    <recommendedName>
        <fullName evidence="1">Nicotinate-nucleotide--dimethylbenzimidazole phosphoribosyltransferase</fullName>
        <shortName evidence="1">NN:DBI PRT</shortName>
        <ecNumber evidence="1">2.4.2.21</ecNumber>
    </recommendedName>
    <alternativeName>
        <fullName evidence="1">N(1)-alpha-phosphoribosyltransferase</fullName>
    </alternativeName>
</protein>